<proteinExistence type="evidence at protein level"/>
<feature type="initiator methionine" description="Removed" evidence="3">
    <location>
        <position position="1"/>
    </location>
</feature>
<feature type="chain" id="PRO_0000051649" description="Cytochrome P450 1A2">
    <location>
        <begin position="2"/>
        <end position="512"/>
    </location>
</feature>
<feature type="binding site" evidence="1">
    <location>
        <position position="222"/>
    </location>
    <ligand>
        <name>substrate</name>
    </ligand>
</feature>
<feature type="binding site" description="axial binding residue" evidence="1">
    <location>
        <position position="454"/>
    </location>
    <ligand>
        <name>heme</name>
        <dbReference type="ChEBI" id="CHEBI:30413"/>
    </ligand>
    <ligandPart>
        <name>Fe</name>
        <dbReference type="ChEBI" id="CHEBI:18248"/>
    </ligandPart>
</feature>
<feature type="glycosylation site" description="O-linked (GlcNAc) serine" evidence="1">
    <location>
        <position position="65"/>
    </location>
</feature>
<dbReference type="EC" id="1.14.14.1" evidence="2"/>
<dbReference type="EC" id="4.2.1.152" evidence="2"/>
<dbReference type="PIR" id="B37222">
    <property type="entry name" value="B37222"/>
</dbReference>
<dbReference type="SMR" id="P56592"/>
<dbReference type="FunCoup" id="P56592">
    <property type="interactions" value="67"/>
</dbReference>
<dbReference type="STRING" id="9615.ENSCAFP00000059348"/>
<dbReference type="GlyCosmos" id="P56592">
    <property type="glycosylation" value="1 site, No reported glycans"/>
</dbReference>
<dbReference type="PaxDb" id="9612-ENSCAFP00000035314"/>
<dbReference type="eggNOG" id="KOG0156">
    <property type="taxonomic scope" value="Eukaryota"/>
</dbReference>
<dbReference type="InParanoid" id="P56592"/>
<dbReference type="OrthoDB" id="1055148at2759"/>
<dbReference type="UniPathway" id="UPA00296"/>
<dbReference type="UniPathway" id="UPA00383"/>
<dbReference type="UniPathway" id="UPA00912"/>
<dbReference type="Proteomes" id="UP000002254">
    <property type="component" value="Unplaced"/>
</dbReference>
<dbReference type="Proteomes" id="UP000694429">
    <property type="component" value="Unplaced"/>
</dbReference>
<dbReference type="Proteomes" id="UP000694542">
    <property type="component" value="Unplaced"/>
</dbReference>
<dbReference type="Proteomes" id="UP000805418">
    <property type="component" value="Unplaced"/>
</dbReference>
<dbReference type="GO" id="GO:0005789">
    <property type="term" value="C:endoplasmic reticulum membrane"/>
    <property type="evidence" value="ECO:0007669"/>
    <property type="project" value="UniProtKB-SubCell"/>
</dbReference>
<dbReference type="GO" id="GO:0043231">
    <property type="term" value="C:intracellular membrane-bounded organelle"/>
    <property type="evidence" value="ECO:0000318"/>
    <property type="project" value="GO_Central"/>
</dbReference>
<dbReference type="GO" id="GO:0101020">
    <property type="term" value="F:estrogen 16-alpha-hydroxylase activity"/>
    <property type="evidence" value="ECO:0000250"/>
    <property type="project" value="UniProtKB"/>
</dbReference>
<dbReference type="GO" id="GO:0101021">
    <property type="term" value="F:estrogen 2-hydroxylase activity"/>
    <property type="evidence" value="ECO:0000250"/>
    <property type="project" value="UniProtKB"/>
</dbReference>
<dbReference type="GO" id="GO:0020037">
    <property type="term" value="F:heme binding"/>
    <property type="evidence" value="ECO:0000250"/>
    <property type="project" value="UniProtKB"/>
</dbReference>
<dbReference type="GO" id="GO:0106256">
    <property type="term" value="F:hydroperoxy icosatetraenoate dehydratase activity"/>
    <property type="evidence" value="ECO:0007669"/>
    <property type="project" value="UniProtKB-EC"/>
</dbReference>
<dbReference type="GO" id="GO:0005506">
    <property type="term" value="F:iron ion binding"/>
    <property type="evidence" value="ECO:0007669"/>
    <property type="project" value="InterPro"/>
</dbReference>
<dbReference type="GO" id="GO:0004497">
    <property type="term" value="F:monooxygenase activity"/>
    <property type="evidence" value="ECO:0000318"/>
    <property type="project" value="GO_Central"/>
</dbReference>
<dbReference type="GO" id="GO:0019369">
    <property type="term" value="P:arachidonate metabolic process"/>
    <property type="evidence" value="ECO:0007669"/>
    <property type="project" value="UniProtKB-UniPathway"/>
</dbReference>
<dbReference type="GO" id="GO:0008203">
    <property type="term" value="P:cholesterol metabolic process"/>
    <property type="evidence" value="ECO:0007669"/>
    <property type="project" value="UniProtKB-UniPathway"/>
</dbReference>
<dbReference type="GO" id="GO:0008210">
    <property type="term" value="P:estrogen metabolic process"/>
    <property type="evidence" value="ECO:0000250"/>
    <property type="project" value="UniProtKB"/>
</dbReference>
<dbReference type="GO" id="GO:0042572">
    <property type="term" value="P:retinol metabolic process"/>
    <property type="evidence" value="ECO:0000250"/>
    <property type="project" value="UniProtKB"/>
</dbReference>
<dbReference type="FunFam" id="1.10.630.10:FF:000002">
    <property type="entry name" value="Cytochrome P450 1A1"/>
    <property type="match status" value="1"/>
</dbReference>
<dbReference type="Gene3D" id="1.10.630.10">
    <property type="entry name" value="Cytochrome P450"/>
    <property type="match status" value="1"/>
</dbReference>
<dbReference type="InterPro" id="IPR001128">
    <property type="entry name" value="Cyt_P450"/>
</dbReference>
<dbReference type="InterPro" id="IPR017972">
    <property type="entry name" value="Cyt_P450_CS"/>
</dbReference>
<dbReference type="InterPro" id="IPR002401">
    <property type="entry name" value="Cyt_P450_E_grp-I"/>
</dbReference>
<dbReference type="InterPro" id="IPR008066">
    <property type="entry name" value="Cyt_P450_E_grp-I_CYP1"/>
</dbReference>
<dbReference type="InterPro" id="IPR036396">
    <property type="entry name" value="Cyt_P450_sf"/>
</dbReference>
<dbReference type="PANTHER" id="PTHR24289:SF21">
    <property type="entry name" value="CYTOCHROME P450 1A"/>
    <property type="match status" value="1"/>
</dbReference>
<dbReference type="PANTHER" id="PTHR24289">
    <property type="entry name" value="STEROID 17-ALPHA-HYDROXYLASE/17,20 LYASE"/>
    <property type="match status" value="1"/>
</dbReference>
<dbReference type="Pfam" id="PF00067">
    <property type="entry name" value="p450"/>
    <property type="match status" value="1"/>
</dbReference>
<dbReference type="PRINTS" id="PR00463">
    <property type="entry name" value="EP450I"/>
</dbReference>
<dbReference type="PRINTS" id="PR01683">
    <property type="entry name" value="EP450ICYP1A"/>
</dbReference>
<dbReference type="PRINTS" id="PR00385">
    <property type="entry name" value="P450"/>
</dbReference>
<dbReference type="SUPFAM" id="SSF48264">
    <property type="entry name" value="Cytochrome P450"/>
    <property type="match status" value="1"/>
</dbReference>
<dbReference type="PROSITE" id="PS00086">
    <property type="entry name" value="CYTOCHROME_P450"/>
    <property type="match status" value="1"/>
</dbReference>
<evidence type="ECO:0000250" key="1"/>
<evidence type="ECO:0000250" key="2">
    <source>
        <dbReference type="UniProtKB" id="P05177"/>
    </source>
</evidence>
<evidence type="ECO:0000269" key="3">
    <source>
    </source>
</evidence>
<evidence type="ECO:0000305" key="4"/>
<protein>
    <recommendedName>
        <fullName>Cytochrome P450 1A2</fullName>
        <ecNumber evidence="2">1.14.14.1</ecNumber>
    </recommendedName>
    <alternativeName>
        <fullName>CYPIA2</fullName>
    </alternativeName>
    <alternativeName>
        <fullName evidence="2">Cholesterol 25-hydroxylase</fullName>
    </alternativeName>
    <alternativeName>
        <fullName>Cytochrome P450-D2</fullName>
    </alternativeName>
    <alternativeName>
        <fullName>DAH2</fullName>
    </alternativeName>
    <alternativeName>
        <fullName>Hydroperoxy icosatetraenoate dehydratase</fullName>
        <ecNumber evidence="2">4.2.1.152</ecNumber>
    </alternativeName>
</protein>
<accession>P56592</accession>
<reference key="1">
    <citation type="journal article" date="1989" name="Biochem. Pharmacol.">
        <title>A novel form of cytochrome P-450 in beagle dogs. P-450-D3 is a low spin form of cytochrome P-450 but with catalytic and structural properties similar to P-450d.</title>
        <authorList>
            <person name="Ohta K."/>
            <person name="Motoya M."/>
            <person name="Komori M."/>
            <person name="Miura T."/>
            <person name="Kitada M."/>
            <person name="Kamataki T."/>
        </authorList>
    </citation>
    <scope>PROTEIN SEQUENCE OF 2-17</scope>
    <source>
        <strain>Beagle</strain>
        <tissue>Liver</tissue>
    </source>
</reference>
<reference key="2">
    <citation type="journal article" date="1990" name="Mol. Pharmacol.">
        <title>Isolation of cDNAs coding for three different forms of liver microsomal cytochrome P-450 from polychlorinated biphenyl-treated beagle dogs.</title>
        <authorList>
            <person name="Uchida T."/>
            <person name="Komori M."/>
            <person name="Kitada M."/>
            <person name="Kamataki T."/>
        </authorList>
    </citation>
    <scope>NUCLEOTIDE SEQUENCE [MRNA] OF 10-512</scope>
    <source>
        <strain>Beagle</strain>
        <tissue>Liver</tissue>
    </source>
</reference>
<organism>
    <name type="scientific">Canis lupus familiaris</name>
    <name type="common">Dog</name>
    <name type="synonym">Canis familiaris</name>
    <dbReference type="NCBI Taxonomy" id="9615"/>
    <lineage>
        <taxon>Eukaryota</taxon>
        <taxon>Metazoa</taxon>
        <taxon>Chordata</taxon>
        <taxon>Craniata</taxon>
        <taxon>Vertebrata</taxon>
        <taxon>Euteleostomi</taxon>
        <taxon>Mammalia</taxon>
        <taxon>Eutheria</taxon>
        <taxon>Laurasiatheria</taxon>
        <taxon>Carnivora</taxon>
        <taxon>Caniformia</taxon>
        <taxon>Canidae</taxon>
        <taxon>Canis</taxon>
    </lineage>
</organism>
<sequence>MALSQMATGLLLASTIFCLILWVVKAWQPRLPKGLKSPPGPWGWPLLGNVLTLGKSPHLALSRLSQRYGDVLQIRIGSTPVLVLSGLDTIRQALVRQGDDFKGRPDLYSLSLITDSQSMSFSPDSGPVWAAGRRLAQNALNTFSIASDPASSCSCYLEEHVSKEAEALLSRLQEQMAEVGRFDPYNQVLLSVANVIGAMCFGHHFSQRSEEMLPLLMSSSDFVETVSSGNPLDFFPILQYMPNSALQRFKNFNQTFVQSLQKIVQEHYQDFDERSVQDITGALLKHNEKSSRASDGHIPQEKIVNLINDIFGAGFDTVTTAISWSLMYLVANPEIQRQIQKELDTVIGRARQPRLSDRPQLPLMEAFILEIFRHTSFVPFTIPHSTTKDTTLKGFYIPKECCVFINQWQVNHDQQVWGDPFAFRPERFLTADGTTINKTLSEKVMLFGMGKRRCIGEVLAKWEIFLFLAILLQRLEFSVPAGVKVDLTPIYGLTMKHTRCEHVQARPRFSIK</sequence>
<keyword id="KW-0903">Direct protein sequencing</keyword>
<keyword id="KW-0256">Endoplasmic reticulum</keyword>
<keyword id="KW-0276">Fatty acid metabolism</keyword>
<keyword id="KW-0325">Glycoprotein</keyword>
<keyword id="KW-0349">Heme</keyword>
<keyword id="KW-0408">Iron</keyword>
<keyword id="KW-0443">Lipid metabolism</keyword>
<keyword id="KW-0456">Lyase</keyword>
<keyword id="KW-0472">Membrane</keyword>
<keyword id="KW-0479">Metal-binding</keyword>
<keyword id="KW-0492">Microsome</keyword>
<keyword id="KW-0503">Monooxygenase</keyword>
<keyword id="KW-0560">Oxidoreductase</keyword>
<keyword id="KW-1185">Reference proteome</keyword>
<keyword id="KW-0753">Steroid metabolism</keyword>
<keyword id="KW-1207">Sterol metabolism</keyword>
<gene>
    <name type="primary">CYP1A2</name>
</gene>
<comment type="function">
    <text evidence="2">A cytochrome P450 monooxygenase involved in the metabolism of various endogenous substrates, including fatty acids, steroid hormones and vitamins. Mechanistically, uses molecular oxygen inserting one oxygen atom into a substrate, and reducing the second into a water molecule, with two electrons provided by NADPH via cytochrome P450 reductase (NADPH--hemoprotein reductase). Catalyzes the hydroxylation of carbon-hydrogen bonds. Exhibits high catalytic activity for the formation of hydroxyestrogens from estrone (E1) and 17beta-estradiol (E2), namely 2-hydroxy E1 and E2. Metabolizes cholesterol toward 25-hydroxycholesterol, a physiological regulator of cellular cholesterol homeostasis. May act as a major enzyme for all-trans retinoic acid biosynthesis in the liver. Catalyzes two successive oxidative transformation of all-trans retinol to all-trans retinal and then to the active form all-trans retinoic acid. Primarily catalyzes stereoselective epoxidation of the last double bond of polyunsaturated fatty acids (PUFA), displaying a strong preference for the (R,S) stereoisomer. Catalyzes bisallylic hydroxylation and omega-1 hydroxylation of PUFA. May also participate in eicosanoids metabolism by converting hydroperoxide species into oxo metabolites (lipoxygenase-like reaction, NADPH-independent). Plays a role in the oxidative metabolism of xenobiotics. Catalyzes the N-hydroxylation of heterocyclic amines and the O-deethylation of phenacetin. Metabolizes caffeine via N3-demethylation.</text>
</comment>
<comment type="catalytic activity">
    <reaction evidence="2">
        <text>an organic molecule + reduced [NADPH--hemoprotein reductase] + O2 = an alcohol + oxidized [NADPH--hemoprotein reductase] + H2O + H(+)</text>
        <dbReference type="Rhea" id="RHEA:17149"/>
        <dbReference type="Rhea" id="RHEA-COMP:11964"/>
        <dbReference type="Rhea" id="RHEA-COMP:11965"/>
        <dbReference type="ChEBI" id="CHEBI:15377"/>
        <dbReference type="ChEBI" id="CHEBI:15378"/>
        <dbReference type="ChEBI" id="CHEBI:15379"/>
        <dbReference type="ChEBI" id="CHEBI:30879"/>
        <dbReference type="ChEBI" id="CHEBI:57618"/>
        <dbReference type="ChEBI" id="CHEBI:58210"/>
        <dbReference type="ChEBI" id="CHEBI:142491"/>
        <dbReference type="EC" id="1.14.14.1"/>
    </reaction>
    <physiologicalReaction direction="left-to-right" evidence="2">
        <dbReference type="Rhea" id="RHEA:17150"/>
    </physiologicalReaction>
</comment>
<comment type="catalytic activity">
    <reaction evidence="2">
        <text>17beta-estradiol + reduced [NADPH--hemoprotein reductase] + O2 = 2-hydroxy-17beta-estradiol + oxidized [NADPH--hemoprotein reductase] + H2O + H(+)</text>
        <dbReference type="Rhea" id="RHEA:47212"/>
        <dbReference type="Rhea" id="RHEA-COMP:11964"/>
        <dbReference type="Rhea" id="RHEA-COMP:11965"/>
        <dbReference type="ChEBI" id="CHEBI:15377"/>
        <dbReference type="ChEBI" id="CHEBI:15378"/>
        <dbReference type="ChEBI" id="CHEBI:15379"/>
        <dbReference type="ChEBI" id="CHEBI:16469"/>
        <dbReference type="ChEBI" id="CHEBI:28744"/>
        <dbReference type="ChEBI" id="CHEBI:57618"/>
        <dbReference type="ChEBI" id="CHEBI:58210"/>
    </reaction>
    <physiologicalReaction direction="left-to-right" evidence="2">
        <dbReference type="Rhea" id="RHEA:47213"/>
    </physiologicalReaction>
</comment>
<comment type="catalytic activity">
    <reaction evidence="2">
        <text>17beta-estradiol + reduced [NADPH--hemoprotein reductase] + O2 = 4-hydroxy-17beta-estradiol + oxidized [NADPH--hemoprotein reductase] + H2O + H(+)</text>
        <dbReference type="Rhea" id="RHEA:47280"/>
        <dbReference type="Rhea" id="RHEA-COMP:11964"/>
        <dbReference type="Rhea" id="RHEA-COMP:11965"/>
        <dbReference type="ChEBI" id="CHEBI:15377"/>
        <dbReference type="ChEBI" id="CHEBI:15378"/>
        <dbReference type="ChEBI" id="CHEBI:15379"/>
        <dbReference type="ChEBI" id="CHEBI:16469"/>
        <dbReference type="ChEBI" id="CHEBI:57618"/>
        <dbReference type="ChEBI" id="CHEBI:58210"/>
        <dbReference type="ChEBI" id="CHEBI:62845"/>
    </reaction>
    <physiologicalReaction direction="left-to-right" evidence="2">
        <dbReference type="Rhea" id="RHEA:47281"/>
    </physiologicalReaction>
</comment>
<comment type="catalytic activity">
    <reaction evidence="2">
        <text>estrone + reduced [NADPH--hemoprotein reductase] + O2 = 2-hydroxyestrone + oxidized [NADPH--hemoprotein reductase] + H2O + H(+)</text>
        <dbReference type="Rhea" id="RHEA:47208"/>
        <dbReference type="Rhea" id="RHEA-COMP:11964"/>
        <dbReference type="Rhea" id="RHEA-COMP:11965"/>
        <dbReference type="ChEBI" id="CHEBI:1156"/>
        <dbReference type="ChEBI" id="CHEBI:15377"/>
        <dbReference type="ChEBI" id="CHEBI:15378"/>
        <dbReference type="ChEBI" id="CHEBI:15379"/>
        <dbReference type="ChEBI" id="CHEBI:17263"/>
        <dbReference type="ChEBI" id="CHEBI:57618"/>
        <dbReference type="ChEBI" id="CHEBI:58210"/>
    </reaction>
    <physiologicalReaction direction="left-to-right" evidence="2">
        <dbReference type="Rhea" id="RHEA:47209"/>
    </physiologicalReaction>
</comment>
<comment type="catalytic activity">
    <reaction evidence="2">
        <text>estrone + reduced [NADPH--hemoprotein reductase] + O2 = 4-hydroxyestrone + oxidized [NADPH--hemoprotein reductase] + H2O + H(+)</text>
        <dbReference type="Rhea" id="RHEA:47292"/>
        <dbReference type="Rhea" id="RHEA-COMP:11964"/>
        <dbReference type="Rhea" id="RHEA-COMP:11965"/>
        <dbReference type="ChEBI" id="CHEBI:15377"/>
        <dbReference type="ChEBI" id="CHEBI:15378"/>
        <dbReference type="ChEBI" id="CHEBI:15379"/>
        <dbReference type="ChEBI" id="CHEBI:17263"/>
        <dbReference type="ChEBI" id="CHEBI:57618"/>
        <dbReference type="ChEBI" id="CHEBI:58210"/>
        <dbReference type="ChEBI" id="CHEBI:87602"/>
    </reaction>
    <physiologicalReaction direction="left-to-right" evidence="2">
        <dbReference type="Rhea" id="RHEA:47293"/>
    </physiologicalReaction>
</comment>
<comment type="catalytic activity">
    <reaction evidence="2">
        <text>cholesterol + reduced [NADPH--hemoprotein reductase] + O2 = 25-hydroxycholesterol + oxidized [NADPH--hemoprotein reductase] + H2O + H(+)</text>
        <dbReference type="Rhea" id="RHEA:50256"/>
        <dbReference type="Rhea" id="RHEA-COMP:11964"/>
        <dbReference type="Rhea" id="RHEA-COMP:11965"/>
        <dbReference type="ChEBI" id="CHEBI:15377"/>
        <dbReference type="ChEBI" id="CHEBI:15378"/>
        <dbReference type="ChEBI" id="CHEBI:15379"/>
        <dbReference type="ChEBI" id="CHEBI:16113"/>
        <dbReference type="ChEBI" id="CHEBI:42977"/>
        <dbReference type="ChEBI" id="CHEBI:57618"/>
        <dbReference type="ChEBI" id="CHEBI:58210"/>
    </reaction>
    <physiologicalReaction direction="left-to-right" evidence="2">
        <dbReference type="Rhea" id="RHEA:50257"/>
    </physiologicalReaction>
</comment>
<comment type="catalytic activity">
    <reaction evidence="2">
        <text>all-trans-retinol + reduced [NADPH--hemoprotein reductase] + O2 = all-trans-retinal + oxidized [NADPH--hemoprotein reductase] + 2 H2O + H(+)</text>
        <dbReference type="Rhea" id="RHEA:42092"/>
        <dbReference type="Rhea" id="RHEA-COMP:11964"/>
        <dbReference type="Rhea" id="RHEA-COMP:11965"/>
        <dbReference type="ChEBI" id="CHEBI:15377"/>
        <dbReference type="ChEBI" id="CHEBI:15378"/>
        <dbReference type="ChEBI" id="CHEBI:15379"/>
        <dbReference type="ChEBI" id="CHEBI:17336"/>
        <dbReference type="ChEBI" id="CHEBI:17898"/>
        <dbReference type="ChEBI" id="CHEBI:57618"/>
        <dbReference type="ChEBI" id="CHEBI:58210"/>
    </reaction>
    <physiologicalReaction direction="left-to-right" evidence="2">
        <dbReference type="Rhea" id="RHEA:42093"/>
    </physiologicalReaction>
</comment>
<comment type="catalytic activity">
    <reaction evidence="2">
        <text>all-trans-retinal + reduced [NADPH--hemoprotein reductase] + O2 = all-trans-retinoate + oxidized [NADPH--hemoprotein reductase] + H2O + 2 H(+)</text>
        <dbReference type="Rhea" id="RHEA:42088"/>
        <dbReference type="Rhea" id="RHEA-COMP:11964"/>
        <dbReference type="Rhea" id="RHEA-COMP:11965"/>
        <dbReference type="ChEBI" id="CHEBI:15377"/>
        <dbReference type="ChEBI" id="CHEBI:15378"/>
        <dbReference type="ChEBI" id="CHEBI:15379"/>
        <dbReference type="ChEBI" id="CHEBI:17898"/>
        <dbReference type="ChEBI" id="CHEBI:35291"/>
        <dbReference type="ChEBI" id="CHEBI:57618"/>
        <dbReference type="ChEBI" id="CHEBI:58210"/>
    </reaction>
    <physiologicalReaction direction="left-to-right" evidence="2">
        <dbReference type="Rhea" id="RHEA:42089"/>
    </physiologicalReaction>
</comment>
<comment type="catalytic activity">
    <reaction evidence="2">
        <text>(5Z,8Z,11Z,14Z)-eicosatetraenoate + reduced [NADPH--hemoprotein reductase] + O2 = (14R,15S)-epoxy-(5Z,8Z,11Z)-eicosatrienoate + oxidized [NADPH--hemoprotein reductase] + H2O + H(+)</text>
        <dbReference type="Rhea" id="RHEA:49860"/>
        <dbReference type="Rhea" id="RHEA-COMP:11964"/>
        <dbReference type="Rhea" id="RHEA-COMP:11965"/>
        <dbReference type="ChEBI" id="CHEBI:15377"/>
        <dbReference type="ChEBI" id="CHEBI:15378"/>
        <dbReference type="ChEBI" id="CHEBI:15379"/>
        <dbReference type="ChEBI" id="CHEBI:32395"/>
        <dbReference type="ChEBI" id="CHEBI:57618"/>
        <dbReference type="ChEBI" id="CHEBI:58210"/>
        <dbReference type="ChEBI" id="CHEBI:131965"/>
    </reaction>
    <physiologicalReaction direction="left-to-right" evidence="2">
        <dbReference type="Rhea" id="RHEA:49861"/>
    </physiologicalReaction>
</comment>
<comment type="catalytic activity">
    <reaction evidence="2">
        <text>(5Z,8Z,11Z,14Z)-eicosatetraenoate + reduced [NADPH--hemoprotein reductase] + O2 = (14S,15R)-epoxy-(5Z,8Z,11Z)-eicosatrienoate + oxidized [NADPH--hemoprotein reductase] + H2O + H(+)</text>
        <dbReference type="Rhea" id="RHEA:49856"/>
        <dbReference type="Rhea" id="RHEA-COMP:11964"/>
        <dbReference type="Rhea" id="RHEA-COMP:11965"/>
        <dbReference type="ChEBI" id="CHEBI:15377"/>
        <dbReference type="ChEBI" id="CHEBI:15378"/>
        <dbReference type="ChEBI" id="CHEBI:15379"/>
        <dbReference type="ChEBI" id="CHEBI:32395"/>
        <dbReference type="ChEBI" id="CHEBI:57618"/>
        <dbReference type="ChEBI" id="CHEBI:58210"/>
        <dbReference type="ChEBI" id="CHEBI:131964"/>
    </reaction>
    <physiologicalReaction direction="left-to-right" evidence="2">
        <dbReference type="Rhea" id="RHEA:49857"/>
    </physiologicalReaction>
</comment>
<comment type="catalytic activity">
    <reaction evidence="2">
        <text>(5Z,8Z,11Z,14Z,17Z)-eicosapentaenoate + reduced [NADPH--hemoprotein reductase] + O2 = (17R,18S)-epoxy-(5Z,8Z,11Z,14Z)-eicosatetraenoate + oxidized [NADPH--hemoprotein reductase] + H2O + H(+)</text>
        <dbReference type="Rhea" id="RHEA:39779"/>
        <dbReference type="Rhea" id="RHEA-COMP:11964"/>
        <dbReference type="Rhea" id="RHEA-COMP:11965"/>
        <dbReference type="ChEBI" id="CHEBI:15377"/>
        <dbReference type="ChEBI" id="CHEBI:15378"/>
        <dbReference type="ChEBI" id="CHEBI:15379"/>
        <dbReference type="ChEBI" id="CHEBI:57618"/>
        <dbReference type="ChEBI" id="CHEBI:58210"/>
        <dbReference type="ChEBI" id="CHEBI:58562"/>
        <dbReference type="ChEBI" id="CHEBI:76634"/>
    </reaction>
    <physiologicalReaction direction="left-to-right" evidence="2">
        <dbReference type="Rhea" id="RHEA:39780"/>
    </physiologicalReaction>
</comment>
<comment type="catalytic activity">
    <reaction evidence="2">
        <text>(4Z,7Z,10Z,13Z,16Z,19Z)-docosahexaenoate + reduced [NADPH--hemoprotein reductase] + O2 = (19R,20S)-epoxy-(4Z,7Z,10Z,13Z,16Z)-docosapentaenoate + oxidized [NADPH--hemoprotein reductase] + H2O + H(+)</text>
        <dbReference type="Rhea" id="RHEA:52120"/>
        <dbReference type="Rhea" id="RHEA-COMP:11964"/>
        <dbReference type="Rhea" id="RHEA-COMP:11965"/>
        <dbReference type="ChEBI" id="CHEBI:15377"/>
        <dbReference type="ChEBI" id="CHEBI:15378"/>
        <dbReference type="ChEBI" id="CHEBI:15379"/>
        <dbReference type="ChEBI" id="CHEBI:57618"/>
        <dbReference type="ChEBI" id="CHEBI:58210"/>
        <dbReference type="ChEBI" id="CHEBI:77016"/>
        <dbReference type="ChEBI" id="CHEBI:136410"/>
    </reaction>
    <physiologicalReaction direction="left-to-right" evidence="2">
        <dbReference type="Rhea" id="RHEA:52121"/>
    </physiologicalReaction>
</comment>
<comment type="catalytic activity">
    <reaction evidence="2">
        <text>(5S)-hydroperoxy-(6E,8Z,11Z,14Z)-eicosatetraenoate = 5-oxo-(6E,8Z,11Z,14Z)-eicosatetraenoate + H2O</text>
        <dbReference type="Rhea" id="RHEA:48632"/>
        <dbReference type="ChEBI" id="CHEBI:15377"/>
        <dbReference type="ChEBI" id="CHEBI:57450"/>
        <dbReference type="ChEBI" id="CHEBI:65342"/>
    </reaction>
    <physiologicalReaction direction="left-to-right" evidence="2">
        <dbReference type="Rhea" id="RHEA:48633"/>
    </physiologicalReaction>
</comment>
<comment type="catalytic activity">
    <reaction evidence="2">
        <text>(12S)-hydroperoxy-(5Z,8Z,10E,14Z)-eicosatetraenoate = 12-oxo-(5Z,8Z,10E,14Z)-eicosatetraenoate + H2O</text>
        <dbReference type="Rhea" id="RHEA:37947"/>
        <dbReference type="ChEBI" id="CHEBI:15377"/>
        <dbReference type="ChEBI" id="CHEBI:57444"/>
        <dbReference type="ChEBI" id="CHEBI:75231"/>
        <dbReference type="EC" id="4.2.1.152"/>
    </reaction>
    <physiologicalReaction direction="left-to-right" evidence="2">
        <dbReference type="Rhea" id="RHEA:37948"/>
    </physiologicalReaction>
</comment>
<comment type="catalytic activity">
    <reaction evidence="2">
        <text>(15S)-hydroperoxy-(5Z,8Z,11Z,13E)-eicosatetraenoate = 15-oxo-(5Z,8Z,11Z,13E)-eicosatetraenoate + H2O</text>
        <dbReference type="Rhea" id="RHEA:48636"/>
        <dbReference type="ChEBI" id="CHEBI:15377"/>
        <dbReference type="ChEBI" id="CHEBI:57410"/>
        <dbReference type="ChEBI" id="CHEBI:57446"/>
    </reaction>
    <physiologicalReaction direction="left-to-right" evidence="2">
        <dbReference type="Rhea" id="RHEA:48637"/>
    </physiologicalReaction>
</comment>
<comment type="catalytic activity">
    <reaction evidence="2">
        <text>(13S)-hydroperoxy-(9Z,11E)-octadecadienoate = 13-oxo-(9Z,11E)-octadecadienoate + H2O</text>
        <dbReference type="Rhea" id="RHEA:48716"/>
        <dbReference type="ChEBI" id="CHEBI:15377"/>
        <dbReference type="ChEBI" id="CHEBI:57466"/>
        <dbReference type="ChEBI" id="CHEBI:90781"/>
    </reaction>
    <physiologicalReaction direction="left-to-right" evidence="2">
        <dbReference type="Rhea" id="RHEA:48717"/>
    </physiologicalReaction>
</comment>
<comment type="catalytic activity">
    <reaction evidence="2">
        <text>(5Z,8Z,11Z,14Z)-eicosatetraenoate + reduced [NADPH--hemoprotein reductase] + O2 = 13-hydroxy-(5Z,8Z,11Z,14Z)-eicosatetraenoate + oxidized [NADPH--hemoprotein reductase] + H2O + H(+)</text>
        <dbReference type="Rhea" id="RHEA:52292"/>
        <dbReference type="Rhea" id="RHEA-COMP:11964"/>
        <dbReference type="Rhea" id="RHEA-COMP:11965"/>
        <dbReference type="ChEBI" id="CHEBI:15377"/>
        <dbReference type="ChEBI" id="CHEBI:15378"/>
        <dbReference type="ChEBI" id="CHEBI:15379"/>
        <dbReference type="ChEBI" id="CHEBI:32395"/>
        <dbReference type="ChEBI" id="CHEBI:57618"/>
        <dbReference type="ChEBI" id="CHEBI:58210"/>
        <dbReference type="ChEBI" id="CHEBI:136524"/>
    </reaction>
    <physiologicalReaction direction="left-to-right" evidence="2">
        <dbReference type="Rhea" id="RHEA:52293"/>
    </physiologicalReaction>
</comment>
<comment type="catalytic activity">
    <reaction evidence="2">
        <text>(5Z,8Z,11Z,14Z)-eicosatetraenoate + reduced [NADPH--hemoprotein reductase] + O2 = 19-hydroxy-(5Z,8Z,11Z,14Z)-eicosatetraenoate + oxidized [NADPH--hemoprotein reductase] + H2O + H(+)</text>
        <dbReference type="Rhea" id="RHEA:39759"/>
        <dbReference type="Rhea" id="RHEA-COMP:11964"/>
        <dbReference type="Rhea" id="RHEA-COMP:11965"/>
        <dbReference type="ChEBI" id="CHEBI:15377"/>
        <dbReference type="ChEBI" id="CHEBI:15378"/>
        <dbReference type="ChEBI" id="CHEBI:15379"/>
        <dbReference type="ChEBI" id="CHEBI:32395"/>
        <dbReference type="ChEBI" id="CHEBI:57618"/>
        <dbReference type="ChEBI" id="CHEBI:58210"/>
        <dbReference type="ChEBI" id="CHEBI:76627"/>
    </reaction>
    <physiologicalReaction direction="left-to-right" evidence="2">
        <dbReference type="Rhea" id="RHEA:39760"/>
    </physiologicalReaction>
</comment>
<comment type="catalytic activity">
    <reaction evidence="2">
        <text>(9Z,12Z)-octadecadienoate + reduced [NADPH--hemoprotein reductase] + O2 = 11-hydroxy-(9Z,12Z)-octadecadienoate + oxidized [NADPH--hemoprotein reductase] + H2O + H(+)</text>
        <dbReference type="Rhea" id="RHEA:52284"/>
        <dbReference type="Rhea" id="RHEA-COMP:11964"/>
        <dbReference type="Rhea" id="RHEA-COMP:11965"/>
        <dbReference type="ChEBI" id="CHEBI:15377"/>
        <dbReference type="ChEBI" id="CHEBI:15378"/>
        <dbReference type="ChEBI" id="CHEBI:15379"/>
        <dbReference type="ChEBI" id="CHEBI:30245"/>
        <dbReference type="ChEBI" id="CHEBI:57618"/>
        <dbReference type="ChEBI" id="CHEBI:58210"/>
        <dbReference type="ChEBI" id="CHEBI:136522"/>
    </reaction>
    <physiologicalReaction direction="left-to-right" evidence="2">
        <dbReference type="Rhea" id="RHEA:52285"/>
    </physiologicalReaction>
</comment>
<comment type="cofactor">
    <cofactor evidence="1">
        <name>heme</name>
        <dbReference type="ChEBI" id="CHEBI:30413"/>
    </cofactor>
</comment>
<comment type="pathway">
    <text evidence="2">Cofactor metabolism; retinol metabolism.</text>
</comment>
<comment type="pathway">
    <text evidence="2">Steroid metabolism; cholesterol metabolism.</text>
</comment>
<comment type="pathway">
    <text evidence="2">Lipid metabolism; arachidonate metabolism.</text>
</comment>
<comment type="subunit">
    <text evidence="2">Interacts with PGRMC1; the interaction requires PGRMC1 homodimerization.</text>
</comment>
<comment type="subcellular location">
    <subcellularLocation>
        <location evidence="2">Endoplasmic reticulum membrane</location>
        <topology evidence="2">Peripheral membrane protein</topology>
    </subcellularLocation>
    <subcellularLocation>
        <location evidence="2">Microsome membrane</location>
        <topology evidence="2">Peripheral membrane protein</topology>
    </subcellularLocation>
</comment>
<comment type="tissue specificity">
    <text>Constitutively expressed in liver.</text>
</comment>
<comment type="induction">
    <text>By polychlorinated biphenyl (PCB) in liver and kidney.</text>
</comment>
<comment type="similarity">
    <text evidence="4">Belongs to the cytochrome P450 family.</text>
</comment>
<name>CP1A2_CANLF</name>